<reference key="1">
    <citation type="journal article" date="2009" name="J. Bacteriol.">
        <title>Complete genome sequence and comparative genome analysis of enteropathogenic Escherichia coli O127:H6 strain E2348/69.</title>
        <authorList>
            <person name="Iguchi A."/>
            <person name="Thomson N.R."/>
            <person name="Ogura Y."/>
            <person name="Saunders D."/>
            <person name="Ooka T."/>
            <person name="Henderson I.R."/>
            <person name="Harris D."/>
            <person name="Asadulghani M."/>
            <person name="Kurokawa K."/>
            <person name="Dean P."/>
            <person name="Kenny B."/>
            <person name="Quail M.A."/>
            <person name="Thurston S."/>
            <person name="Dougan G."/>
            <person name="Hayashi T."/>
            <person name="Parkhill J."/>
            <person name="Frankel G."/>
        </authorList>
    </citation>
    <scope>NUCLEOTIDE SEQUENCE [LARGE SCALE GENOMIC DNA]</scope>
    <source>
        <strain>E2348/69 / EPEC</strain>
    </source>
</reference>
<protein>
    <recommendedName>
        <fullName evidence="1">NADH-quinone oxidoreductase subunit B</fullName>
        <ecNumber evidence="1">7.1.1.-</ecNumber>
    </recommendedName>
    <alternativeName>
        <fullName evidence="1">NADH dehydrogenase I subunit B</fullName>
    </alternativeName>
    <alternativeName>
        <fullName evidence="1">NDH-1 subunit B</fullName>
    </alternativeName>
</protein>
<organism>
    <name type="scientific">Escherichia coli O127:H6 (strain E2348/69 / EPEC)</name>
    <dbReference type="NCBI Taxonomy" id="574521"/>
    <lineage>
        <taxon>Bacteria</taxon>
        <taxon>Pseudomonadati</taxon>
        <taxon>Pseudomonadota</taxon>
        <taxon>Gammaproteobacteria</taxon>
        <taxon>Enterobacterales</taxon>
        <taxon>Enterobacteriaceae</taxon>
        <taxon>Escherichia</taxon>
    </lineage>
</organism>
<dbReference type="EC" id="7.1.1.-" evidence="1"/>
<dbReference type="EMBL" id="FM180568">
    <property type="protein sequence ID" value="CAS09975.1"/>
    <property type="molecule type" value="Genomic_DNA"/>
</dbReference>
<dbReference type="RefSeq" id="WP_000386733.1">
    <property type="nucleotide sequence ID" value="NC_011601.1"/>
</dbReference>
<dbReference type="SMR" id="B7UFU5"/>
<dbReference type="GeneID" id="93774887"/>
<dbReference type="KEGG" id="ecg:E2348C_2427"/>
<dbReference type="HOGENOM" id="CLU_055737_7_3_6"/>
<dbReference type="Proteomes" id="UP000008205">
    <property type="component" value="Chromosome"/>
</dbReference>
<dbReference type="GO" id="GO:0005886">
    <property type="term" value="C:plasma membrane"/>
    <property type="evidence" value="ECO:0007669"/>
    <property type="project" value="UniProtKB-SubCell"/>
</dbReference>
<dbReference type="GO" id="GO:0045271">
    <property type="term" value="C:respiratory chain complex I"/>
    <property type="evidence" value="ECO:0007669"/>
    <property type="project" value="TreeGrafter"/>
</dbReference>
<dbReference type="GO" id="GO:0051539">
    <property type="term" value="F:4 iron, 4 sulfur cluster binding"/>
    <property type="evidence" value="ECO:0007669"/>
    <property type="project" value="UniProtKB-KW"/>
</dbReference>
<dbReference type="GO" id="GO:0005506">
    <property type="term" value="F:iron ion binding"/>
    <property type="evidence" value="ECO:0007669"/>
    <property type="project" value="UniProtKB-UniRule"/>
</dbReference>
<dbReference type="GO" id="GO:0008137">
    <property type="term" value="F:NADH dehydrogenase (ubiquinone) activity"/>
    <property type="evidence" value="ECO:0007669"/>
    <property type="project" value="InterPro"/>
</dbReference>
<dbReference type="GO" id="GO:0050136">
    <property type="term" value="F:NADH:ubiquinone reductase (non-electrogenic) activity"/>
    <property type="evidence" value="ECO:0007669"/>
    <property type="project" value="UniProtKB-UniRule"/>
</dbReference>
<dbReference type="GO" id="GO:0048038">
    <property type="term" value="F:quinone binding"/>
    <property type="evidence" value="ECO:0007669"/>
    <property type="project" value="UniProtKB-KW"/>
</dbReference>
<dbReference type="GO" id="GO:0009060">
    <property type="term" value="P:aerobic respiration"/>
    <property type="evidence" value="ECO:0007669"/>
    <property type="project" value="TreeGrafter"/>
</dbReference>
<dbReference type="GO" id="GO:0015990">
    <property type="term" value="P:electron transport coupled proton transport"/>
    <property type="evidence" value="ECO:0007669"/>
    <property type="project" value="TreeGrafter"/>
</dbReference>
<dbReference type="FunFam" id="3.40.50.12280:FF:000002">
    <property type="entry name" value="NADH-quinone oxidoreductase subunit B"/>
    <property type="match status" value="1"/>
</dbReference>
<dbReference type="Gene3D" id="3.40.50.12280">
    <property type="match status" value="1"/>
</dbReference>
<dbReference type="HAMAP" id="MF_01356">
    <property type="entry name" value="NDH1_NuoB"/>
    <property type="match status" value="1"/>
</dbReference>
<dbReference type="InterPro" id="IPR006137">
    <property type="entry name" value="NADH_UbQ_OxRdtase-like_20kDa"/>
</dbReference>
<dbReference type="InterPro" id="IPR006138">
    <property type="entry name" value="NADH_UQ_OxRdtase_20Kd_su"/>
</dbReference>
<dbReference type="NCBIfam" id="TIGR01957">
    <property type="entry name" value="nuoB_fam"/>
    <property type="match status" value="1"/>
</dbReference>
<dbReference type="NCBIfam" id="NF005012">
    <property type="entry name" value="PRK06411.1"/>
    <property type="match status" value="1"/>
</dbReference>
<dbReference type="PANTHER" id="PTHR11995">
    <property type="entry name" value="NADH DEHYDROGENASE"/>
    <property type="match status" value="1"/>
</dbReference>
<dbReference type="PANTHER" id="PTHR11995:SF14">
    <property type="entry name" value="NADH DEHYDROGENASE [UBIQUINONE] IRON-SULFUR PROTEIN 7, MITOCHONDRIAL"/>
    <property type="match status" value="1"/>
</dbReference>
<dbReference type="Pfam" id="PF01058">
    <property type="entry name" value="Oxidored_q6"/>
    <property type="match status" value="1"/>
</dbReference>
<dbReference type="SUPFAM" id="SSF56770">
    <property type="entry name" value="HydA/Nqo6-like"/>
    <property type="match status" value="1"/>
</dbReference>
<dbReference type="PROSITE" id="PS01150">
    <property type="entry name" value="COMPLEX1_20K"/>
    <property type="match status" value="1"/>
</dbReference>
<accession>B7UFU5</accession>
<gene>
    <name evidence="1" type="primary">nuoB</name>
    <name type="ordered locus">E2348C_2427</name>
</gene>
<evidence type="ECO:0000255" key="1">
    <source>
        <dbReference type="HAMAP-Rule" id="MF_01356"/>
    </source>
</evidence>
<proteinExistence type="inferred from homology"/>
<comment type="function">
    <text evidence="1">NDH-1 shuttles electrons from NADH, via FMN and iron-sulfur (Fe-S) centers, to quinones in the respiratory chain. The immediate electron acceptor for the enzyme in this species is believed to be ubiquinone. Couples the redox reaction to proton translocation (for every two electrons transferred, four hydrogen ions are translocated across the cytoplasmic membrane), and thus conserves the redox energy in a proton gradient.</text>
</comment>
<comment type="catalytic activity">
    <reaction evidence="1">
        <text>a quinone + NADH + 5 H(+)(in) = a quinol + NAD(+) + 4 H(+)(out)</text>
        <dbReference type="Rhea" id="RHEA:57888"/>
        <dbReference type="ChEBI" id="CHEBI:15378"/>
        <dbReference type="ChEBI" id="CHEBI:24646"/>
        <dbReference type="ChEBI" id="CHEBI:57540"/>
        <dbReference type="ChEBI" id="CHEBI:57945"/>
        <dbReference type="ChEBI" id="CHEBI:132124"/>
    </reaction>
</comment>
<comment type="cofactor">
    <cofactor evidence="1">
        <name>[4Fe-4S] cluster</name>
        <dbReference type="ChEBI" id="CHEBI:49883"/>
    </cofactor>
    <text evidence="1">Binds 1 [4Fe-4S] cluster.</text>
</comment>
<comment type="subunit">
    <text evidence="1">NDH-1 is composed of 13 different subunits. Subunits NuoB, CD, E, F, and G constitute the peripheral sector of the complex.</text>
</comment>
<comment type="subcellular location">
    <subcellularLocation>
        <location evidence="1">Cell inner membrane</location>
        <topology evidence="1">Peripheral membrane protein</topology>
        <orientation evidence="1">Cytoplasmic side</orientation>
    </subcellularLocation>
</comment>
<comment type="similarity">
    <text evidence="1">Belongs to the complex I 20 kDa subunit family.</text>
</comment>
<name>NUOB_ECO27</name>
<feature type="chain" id="PRO_0000376212" description="NADH-quinone oxidoreductase subunit B">
    <location>
        <begin position="1"/>
        <end position="220"/>
    </location>
</feature>
<feature type="binding site" evidence="1">
    <location>
        <position position="63"/>
    </location>
    <ligand>
        <name>[4Fe-4S] cluster</name>
        <dbReference type="ChEBI" id="CHEBI:49883"/>
    </ligand>
</feature>
<feature type="binding site" evidence="1">
    <location>
        <position position="64"/>
    </location>
    <ligand>
        <name>[4Fe-4S] cluster</name>
        <dbReference type="ChEBI" id="CHEBI:49883"/>
    </ligand>
</feature>
<feature type="binding site" evidence="1">
    <location>
        <position position="129"/>
    </location>
    <ligand>
        <name>[4Fe-4S] cluster</name>
        <dbReference type="ChEBI" id="CHEBI:49883"/>
    </ligand>
</feature>
<feature type="binding site" evidence="1">
    <location>
        <position position="158"/>
    </location>
    <ligand>
        <name>[4Fe-4S] cluster</name>
        <dbReference type="ChEBI" id="CHEBI:49883"/>
    </ligand>
</feature>
<keyword id="KW-0004">4Fe-4S</keyword>
<keyword id="KW-0997">Cell inner membrane</keyword>
<keyword id="KW-1003">Cell membrane</keyword>
<keyword id="KW-0408">Iron</keyword>
<keyword id="KW-0411">Iron-sulfur</keyword>
<keyword id="KW-0472">Membrane</keyword>
<keyword id="KW-0479">Metal-binding</keyword>
<keyword id="KW-0520">NAD</keyword>
<keyword id="KW-0874">Quinone</keyword>
<keyword id="KW-1185">Reference proteome</keyword>
<keyword id="KW-1278">Translocase</keyword>
<keyword id="KW-0813">Transport</keyword>
<keyword id="KW-0830">Ubiquinone</keyword>
<sequence length="220" mass="25056">MDYTLTRIDPNGENDRYPLQKQEIVTDPLEQEVNKNVFMGKLNDMVNWGRKNSIWPYNFGLSCCYVEMVTSFTAVHDVARFGAEVLRASPRQADLMVVAGTCFTKMAPVIQRLYDQMLEPKWVISMGACANSGGMYDIYSVVQGVDKFIPVDVYIPGCPPRPEAYMQALMLLQESIGKERRPLSWVVGDQGVYRANMQSERERKRGERIAVTNLRTPDEI</sequence>